<evidence type="ECO:0000250" key="1"/>
<evidence type="ECO:0000255" key="2"/>
<evidence type="ECO:0000305" key="3"/>
<dbReference type="EC" id="7.3.2.3"/>
<dbReference type="EMBL" id="AF285185">
    <property type="protein sequence ID" value="AAG41904.1"/>
    <property type="molecule type" value="Genomic_DNA"/>
</dbReference>
<dbReference type="SMR" id="Q9G4F5"/>
<dbReference type="GO" id="GO:0043190">
    <property type="term" value="C:ATP-binding cassette (ABC) transporter complex"/>
    <property type="evidence" value="ECO:0007669"/>
    <property type="project" value="InterPro"/>
</dbReference>
<dbReference type="GO" id="GO:0005739">
    <property type="term" value="C:mitochondrion"/>
    <property type="evidence" value="ECO:0007669"/>
    <property type="project" value="UniProtKB-SubCell"/>
</dbReference>
<dbReference type="GO" id="GO:0015419">
    <property type="term" value="F:ABC-type sulfate transporter activity"/>
    <property type="evidence" value="ECO:0007669"/>
    <property type="project" value="InterPro"/>
</dbReference>
<dbReference type="GO" id="GO:0102025">
    <property type="term" value="F:ABC-type thiosulfate transporter activity"/>
    <property type="evidence" value="ECO:0007669"/>
    <property type="project" value="RHEA"/>
</dbReference>
<dbReference type="GO" id="GO:0005524">
    <property type="term" value="F:ATP binding"/>
    <property type="evidence" value="ECO:0007669"/>
    <property type="project" value="UniProtKB-KW"/>
</dbReference>
<dbReference type="GO" id="GO:0016887">
    <property type="term" value="F:ATP hydrolysis activity"/>
    <property type="evidence" value="ECO:0007669"/>
    <property type="project" value="InterPro"/>
</dbReference>
<dbReference type="CDD" id="cd03296">
    <property type="entry name" value="ABC_CysA_sulfate_importer"/>
    <property type="match status" value="1"/>
</dbReference>
<dbReference type="FunFam" id="3.40.50.300:FF:000227">
    <property type="entry name" value="Sulfate/thiosulfate import ATP-binding protein CysA"/>
    <property type="match status" value="1"/>
</dbReference>
<dbReference type="Gene3D" id="3.40.50.300">
    <property type="entry name" value="P-loop containing nucleotide triphosphate hydrolases"/>
    <property type="match status" value="1"/>
</dbReference>
<dbReference type="Gene3D" id="3.40.190.10">
    <property type="entry name" value="Periplasmic binding protein-like II"/>
    <property type="match status" value="1"/>
</dbReference>
<dbReference type="InterPro" id="IPR003593">
    <property type="entry name" value="AAA+_ATPase"/>
</dbReference>
<dbReference type="InterPro" id="IPR050093">
    <property type="entry name" value="ABC_SmlMolc_Importer"/>
</dbReference>
<dbReference type="InterPro" id="IPR003439">
    <property type="entry name" value="ABC_transporter-like_ATP-bd"/>
</dbReference>
<dbReference type="InterPro" id="IPR017871">
    <property type="entry name" value="ABC_transporter-like_CS"/>
</dbReference>
<dbReference type="InterPro" id="IPR041193">
    <property type="entry name" value="CysA_C"/>
</dbReference>
<dbReference type="InterPro" id="IPR027417">
    <property type="entry name" value="P-loop_NTPase"/>
</dbReference>
<dbReference type="InterPro" id="IPR005666">
    <property type="entry name" value="Sulph_transpt1"/>
</dbReference>
<dbReference type="NCBIfam" id="TIGR00968">
    <property type="entry name" value="3a0106s01"/>
    <property type="match status" value="1"/>
</dbReference>
<dbReference type="PANTHER" id="PTHR42781">
    <property type="entry name" value="SPERMIDINE/PUTRESCINE IMPORT ATP-BINDING PROTEIN POTA"/>
    <property type="match status" value="1"/>
</dbReference>
<dbReference type="PANTHER" id="PTHR42781:SF4">
    <property type="entry name" value="SPERMIDINE_PUTRESCINE IMPORT ATP-BINDING PROTEIN POTA"/>
    <property type="match status" value="1"/>
</dbReference>
<dbReference type="Pfam" id="PF00005">
    <property type="entry name" value="ABC_tran"/>
    <property type="match status" value="1"/>
</dbReference>
<dbReference type="Pfam" id="PF17850">
    <property type="entry name" value="CysA_C_terminal"/>
    <property type="match status" value="1"/>
</dbReference>
<dbReference type="SMART" id="SM00382">
    <property type="entry name" value="AAA"/>
    <property type="match status" value="1"/>
</dbReference>
<dbReference type="SUPFAM" id="SSF52540">
    <property type="entry name" value="P-loop containing nucleoside triphosphate hydrolases"/>
    <property type="match status" value="1"/>
</dbReference>
<dbReference type="SUPFAM" id="SSF53850">
    <property type="entry name" value="Periplasmic binding protein-like II"/>
    <property type="match status" value="1"/>
</dbReference>
<dbReference type="PROSITE" id="PS00211">
    <property type="entry name" value="ABC_TRANSPORTER_1"/>
    <property type="match status" value="1"/>
</dbReference>
<dbReference type="PROSITE" id="PS50893">
    <property type="entry name" value="ABC_TRANSPORTER_2"/>
    <property type="match status" value="1"/>
</dbReference>
<dbReference type="PROSITE" id="PS51237">
    <property type="entry name" value="CYSA"/>
    <property type="match status" value="1"/>
</dbReference>
<proteinExistence type="inferred from homology"/>
<organism>
    <name type="scientific">Cucumis sativus</name>
    <name type="common">Cucumber</name>
    <dbReference type="NCBI Taxonomy" id="3659"/>
    <lineage>
        <taxon>Eukaryota</taxon>
        <taxon>Viridiplantae</taxon>
        <taxon>Streptophyta</taxon>
        <taxon>Embryophyta</taxon>
        <taxon>Tracheophyta</taxon>
        <taxon>Spermatophyta</taxon>
        <taxon>Magnoliopsida</taxon>
        <taxon>eudicotyledons</taxon>
        <taxon>Gunneridae</taxon>
        <taxon>Pentapetalae</taxon>
        <taxon>rosids</taxon>
        <taxon>fabids</taxon>
        <taxon>Cucurbitales</taxon>
        <taxon>Cucurbitaceae</taxon>
        <taxon>Benincaseae</taxon>
        <taxon>Cucumis</taxon>
    </lineage>
</organism>
<comment type="function">
    <text evidence="1">Part of the ABC transporter complex involved in sulfate/thiosulfate import. Responsible for energy coupling to the transport system (By similarity).</text>
</comment>
<comment type="catalytic activity">
    <reaction evidence="3">
        <text>sulfate(out) + ATP + H2O = sulfate(in) + ADP + phosphate + H(+)</text>
        <dbReference type="Rhea" id="RHEA:10192"/>
        <dbReference type="ChEBI" id="CHEBI:15377"/>
        <dbReference type="ChEBI" id="CHEBI:15378"/>
        <dbReference type="ChEBI" id="CHEBI:16189"/>
        <dbReference type="ChEBI" id="CHEBI:30616"/>
        <dbReference type="ChEBI" id="CHEBI:43474"/>
        <dbReference type="ChEBI" id="CHEBI:456216"/>
        <dbReference type="EC" id="7.3.2.3"/>
    </reaction>
</comment>
<comment type="catalytic activity">
    <reaction evidence="3">
        <text>thiosulfate(out) + ATP + H2O = thiosulfate(in) + ADP + phosphate + H(+)</text>
        <dbReference type="Rhea" id="RHEA:29871"/>
        <dbReference type="ChEBI" id="CHEBI:15377"/>
        <dbReference type="ChEBI" id="CHEBI:15378"/>
        <dbReference type="ChEBI" id="CHEBI:30616"/>
        <dbReference type="ChEBI" id="CHEBI:33542"/>
        <dbReference type="ChEBI" id="CHEBI:43474"/>
        <dbReference type="ChEBI" id="CHEBI:456216"/>
        <dbReference type="EC" id="7.3.2.3"/>
    </reaction>
</comment>
<comment type="subcellular location">
    <subcellularLocation>
        <location evidence="3">Mitochondrion</location>
    </subcellularLocation>
</comment>
<comment type="similarity">
    <text evidence="3">Belongs to the ABC transporter superfamily. Sulfate/tungstate importer (TC 3.A.1.6) family.</text>
</comment>
<reference key="1">
    <citation type="journal article" date="2000" name="Yi Chuan Xue Bao">
        <title>Properties and nucleotide sequence of mitochondrial plasmid-like DNA pC1 of Cucumber.</title>
        <authorList>
            <person name="Li J."/>
            <person name="Wen Y."/>
            <person name="Gao C."/>
        </authorList>
    </citation>
    <scope>NUCLEOTIDE SEQUENCE [GENOMIC DNA]</scope>
    <source>
        <strain>cv. Jinyan 4</strain>
    </source>
</reference>
<sequence length="350" mass="39313">MSIEVRNLSKRFGQFRALNDVSLHIETGELVALLGPSGCGKTTLLRIIAGLESADNGSVLFAGEDATSVDVRQRQVGFVFQHYALFKHMTVFENVAFGLRVKHRSQRPSEDQIQRKVHDLLGLVQLDWLADRYPAQLSGGQRQRIALARALAVEPRVLLLDEPFGALDAKVRKELRRWLRRLHDELNVASVFVTHDQEEALEVADRVVLMNAGRIEQVGTPREVWEGPATPFVYGFLGDVNQLQGVASRGVWEGAGLSLPAPELAQAENQRATAYVRPHEFLYTPAAQEIIAKNYYRPIDKTVAAKYESKFPKVKLVTIDDKIFGGWRKAQKDHFSDGGTFDQIYQPQKK</sequence>
<keyword id="KW-0067">ATP-binding</keyword>
<keyword id="KW-0496">Mitochondrion</keyword>
<keyword id="KW-0547">Nucleotide-binding</keyword>
<keyword id="KW-0614">Plasmid</keyword>
<keyword id="KW-0764">Sulfate transport</keyword>
<keyword id="KW-1278">Translocase</keyword>
<keyword id="KW-0813">Transport</keyword>
<geneLocation type="mitochondrion"/>
<geneLocation type="plasmid">
    <name>pC1</name>
</geneLocation>
<gene>
    <name type="primary">CYSA</name>
</gene>
<accession>Q9G4F5</accession>
<protein>
    <recommendedName>
        <fullName>Sulfate/thiosulfate import ATP-binding protein cysA</fullName>
        <ecNumber>7.3.2.3</ecNumber>
    </recommendedName>
    <alternativeName>
        <fullName>Sulfate-transporting ATPase</fullName>
    </alternativeName>
</protein>
<feature type="chain" id="PRO_0000092311" description="Sulfate/thiosulfate import ATP-binding protein cysA">
    <location>
        <begin position="1"/>
        <end position="350"/>
    </location>
</feature>
<feature type="domain" description="ABC transporter">
    <location>
        <begin position="3"/>
        <end position="237"/>
    </location>
</feature>
<feature type="binding site" evidence="2">
    <location>
        <begin position="35"/>
        <end position="42"/>
    </location>
    <ligand>
        <name>ATP</name>
        <dbReference type="ChEBI" id="CHEBI:30616"/>
    </ligand>
</feature>
<name>CYSA_CUCSA</name>